<keyword id="KW-0275">Fatty acid biosynthesis</keyword>
<keyword id="KW-0276">Fatty acid metabolism</keyword>
<keyword id="KW-0444">Lipid biosynthesis</keyword>
<keyword id="KW-0443">Lipid metabolism</keyword>
<keyword id="KW-0496">Mitochondrion</keyword>
<keyword id="KW-0521">NADP</keyword>
<keyword id="KW-0560">Oxidoreductase</keyword>
<keyword id="KW-1185">Reference proteome</keyword>
<keyword id="KW-0809">Transit peptide</keyword>
<comment type="function">
    <text evidence="1">Catalyzes the NADPH-dependent reduction of trans-2-enoyl thioesters in mitochondrial fatty acid synthesis (fatty acid synthesis type II). Fatty acid chain elongation in mitochondria uses acyl carrier protein (ACP) as an acyl group carrier, but the enzyme accepts both ACP and CoA thioesters as substrates in vitro. Required for respiration and the maintenance of the mitochondrial compartment.</text>
</comment>
<comment type="catalytic activity">
    <reaction evidence="1">
        <text>a 2,3-saturated acyl-[ACP] + NADP(+) = a (2E)-enoyl-[ACP] + NADPH + H(+)</text>
        <dbReference type="Rhea" id="RHEA:22564"/>
        <dbReference type="Rhea" id="RHEA-COMP:9925"/>
        <dbReference type="Rhea" id="RHEA-COMP:9926"/>
        <dbReference type="ChEBI" id="CHEBI:15378"/>
        <dbReference type="ChEBI" id="CHEBI:57783"/>
        <dbReference type="ChEBI" id="CHEBI:58349"/>
        <dbReference type="ChEBI" id="CHEBI:78784"/>
        <dbReference type="ChEBI" id="CHEBI:78785"/>
        <dbReference type="EC" id="1.3.1.104"/>
    </reaction>
</comment>
<comment type="subunit">
    <text evidence="2">Homodimer.</text>
</comment>
<comment type="subcellular location">
    <subcellularLocation>
        <location evidence="1">Mitochondrion matrix</location>
    </subcellularLocation>
</comment>
<comment type="similarity">
    <text evidence="4">Belongs to the zinc-containing alcohol dehydrogenase family. Quinone oxidoreductase subfamily.</text>
</comment>
<evidence type="ECO:0000250" key="1">
    <source>
        <dbReference type="UniProtKB" id="P38071"/>
    </source>
</evidence>
<evidence type="ECO:0000250" key="2">
    <source>
        <dbReference type="UniProtKB" id="Q8WZM3"/>
    </source>
</evidence>
<evidence type="ECO:0000255" key="3"/>
<evidence type="ECO:0000305" key="4"/>
<name>ETR1_DEBHA</name>
<organism>
    <name type="scientific">Debaryomyces hansenii (strain ATCC 36239 / CBS 767 / BCRC 21394 / JCM 1990 / NBRC 0083 / IGC 2968)</name>
    <name type="common">Yeast</name>
    <name type="synonym">Torulaspora hansenii</name>
    <dbReference type="NCBI Taxonomy" id="284592"/>
    <lineage>
        <taxon>Eukaryota</taxon>
        <taxon>Fungi</taxon>
        <taxon>Dikarya</taxon>
        <taxon>Ascomycota</taxon>
        <taxon>Saccharomycotina</taxon>
        <taxon>Pichiomycetes</taxon>
        <taxon>Debaryomycetaceae</taxon>
        <taxon>Debaryomyces</taxon>
    </lineage>
</organism>
<dbReference type="EC" id="1.3.1.104"/>
<dbReference type="EMBL" id="CR382138">
    <property type="protein sequence ID" value="CAR66313.1"/>
    <property type="molecule type" value="Genomic_DNA"/>
</dbReference>
<dbReference type="RefSeq" id="XP_002770788.1">
    <property type="nucleotide sequence ID" value="XM_002770742.1"/>
</dbReference>
<dbReference type="SMR" id="Q6BLV6"/>
<dbReference type="STRING" id="284592.Q6BLV6"/>
<dbReference type="GeneID" id="8998934"/>
<dbReference type="KEGG" id="dha:DEHA2F10362g"/>
<dbReference type="VEuPathDB" id="FungiDB:DEHA2F10362g"/>
<dbReference type="eggNOG" id="KOG0025">
    <property type="taxonomic scope" value="Eukaryota"/>
</dbReference>
<dbReference type="HOGENOM" id="CLU_026673_17_0_1"/>
<dbReference type="InParanoid" id="Q6BLV6"/>
<dbReference type="OMA" id="WLMTWIR"/>
<dbReference type="OrthoDB" id="7482721at2759"/>
<dbReference type="Proteomes" id="UP000000599">
    <property type="component" value="Chromosome F"/>
</dbReference>
<dbReference type="GO" id="GO:0005759">
    <property type="term" value="C:mitochondrial matrix"/>
    <property type="evidence" value="ECO:0007669"/>
    <property type="project" value="UniProtKB-SubCell"/>
</dbReference>
<dbReference type="GO" id="GO:0141148">
    <property type="term" value="F:enoyl-[acyl-carrier-protein] reductase (NADPH) activity"/>
    <property type="evidence" value="ECO:0007669"/>
    <property type="project" value="UniProtKB-EC"/>
</dbReference>
<dbReference type="GO" id="GO:0006633">
    <property type="term" value="P:fatty acid biosynthetic process"/>
    <property type="evidence" value="ECO:0007669"/>
    <property type="project" value="UniProtKB-KW"/>
</dbReference>
<dbReference type="CDD" id="cd08290">
    <property type="entry name" value="ETR"/>
    <property type="match status" value="1"/>
</dbReference>
<dbReference type="Gene3D" id="3.90.180.10">
    <property type="entry name" value="Medium-chain alcohol dehydrogenases, catalytic domain"/>
    <property type="match status" value="1"/>
</dbReference>
<dbReference type="Gene3D" id="3.40.50.720">
    <property type="entry name" value="NAD(P)-binding Rossmann-like Domain"/>
    <property type="match status" value="1"/>
</dbReference>
<dbReference type="InterPro" id="IPR013154">
    <property type="entry name" value="ADH-like_N"/>
</dbReference>
<dbReference type="InterPro" id="IPR011032">
    <property type="entry name" value="GroES-like_sf"/>
</dbReference>
<dbReference type="InterPro" id="IPR051034">
    <property type="entry name" value="Mito_Enoyl-ACP_Reductase"/>
</dbReference>
<dbReference type="InterPro" id="IPR036291">
    <property type="entry name" value="NAD(P)-bd_dom_sf"/>
</dbReference>
<dbReference type="PANTHER" id="PTHR43981">
    <property type="entry name" value="ENOYL-[ACYL-CARRIER-PROTEIN] REDUCTASE, MITOCHONDRIAL"/>
    <property type="match status" value="1"/>
</dbReference>
<dbReference type="PANTHER" id="PTHR43981:SF2">
    <property type="entry name" value="ENOYL-[ACYL-CARRIER-PROTEIN] REDUCTASE, MITOCHONDRIAL"/>
    <property type="match status" value="1"/>
</dbReference>
<dbReference type="Pfam" id="PF08240">
    <property type="entry name" value="ADH_N"/>
    <property type="match status" value="1"/>
</dbReference>
<dbReference type="SUPFAM" id="SSF50129">
    <property type="entry name" value="GroES-like"/>
    <property type="match status" value="1"/>
</dbReference>
<dbReference type="SUPFAM" id="SSF51735">
    <property type="entry name" value="NAD(P)-binding Rossmann-fold domains"/>
    <property type="match status" value="1"/>
</dbReference>
<feature type="transit peptide" description="Mitochondrion" evidence="3">
    <location>
        <begin position="1"/>
        <end status="unknown"/>
    </location>
</feature>
<feature type="chain" id="PRO_0000000900" description="Enoyl-[acyl-carrier-protein] reductase 1, mitochondrial">
    <location>
        <begin status="unknown"/>
        <end position="378"/>
    </location>
</feature>
<feature type="active site" description="Proton donor" evidence="2">
    <location>
        <position position="59"/>
    </location>
</feature>
<feature type="binding site" evidence="2">
    <location>
        <position position="151"/>
    </location>
    <ligand>
        <name>NADP(+)</name>
        <dbReference type="ChEBI" id="CHEBI:58349"/>
    </ligand>
</feature>
<feature type="binding site" evidence="2">
    <location>
        <begin position="180"/>
        <end position="183"/>
    </location>
    <ligand>
        <name>NADP(+)</name>
        <dbReference type="ChEBI" id="CHEBI:58349"/>
    </ligand>
</feature>
<feature type="binding site" evidence="2">
    <location>
        <begin position="203"/>
        <end position="206"/>
    </location>
    <ligand>
        <name>NADP(+)</name>
        <dbReference type="ChEBI" id="CHEBI:58349"/>
    </ligand>
</feature>
<feature type="binding site" evidence="2">
    <location>
        <begin position="284"/>
        <end position="287"/>
    </location>
    <ligand>
        <name>NADP(+)</name>
        <dbReference type="ChEBI" id="CHEBI:58349"/>
    </ligand>
</feature>
<feature type="binding site" evidence="2">
    <location>
        <begin position="309"/>
        <end position="311"/>
    </location>
    <ligand>
        <name>NADP(+)</name>
        <dbReference type="ChEBI" id="CHEBI:58349"/>
    </ligand>
</feature>
<feature type="binding site" evidence="2">
    <location>
        <position position="372"/>
    </location>
    <ligand>
        <name>NADP(+)</name>
        <dbReference type="ChEBI" id="CHEBI:58349"/>
    </ligand>
</feature>
<reference key="1">
    <citation type="journal article" date="2004" name="Nature">
        <title>Genome evolution in yeasts.</title>
        <authorList>
            <person name="Dujon B."/>
            <person name="Sherman D."/>
            <person name="Fischer G."/>
            <person name="Durrens P."/>
            <person name="Casaregola S."/>
            <person name="Lafontaine I."/>
            <person name="de Montigny J."/>
            <person name="Marck C."/>
            <person name="Neuveglise C."/>
            <person name="Talla E."/>
            <person name="Goffard N."/>
            <person name="Frangeul L."/>
            <person name="Aigle M."/>
            <person name="Anthouard V."/>
            <person name="Babour A."/>
            <person name="Barbe V."/>
            <person name="Barnay S."/>
            <person name="Blanchin S."/>
            <person name="Beckerich J.-M."/>
            <person name="Beyne E."/>
            <person name="Bleykasten C."/>
            <person name="Boisrame A."/>
            <person name="Boyer J."/>
            <person name="Cattolico L."/>
            <person name="Confanioleri F."/>
            <person name="de Daruvar A."/>
            <person name="Despons L."/>
            <person name="Fabre E."/>
            <person name="Fairhead C."/>
            <person name="Ferry-Dumazet H."/>
            <person name="Groppi A."/>
            <person name="Hantraye F."/>
            <person name="Hennequin C."/>
            <person name="Jauniaux N."/>
            <person name="Joyet P."/>
            <person name="Kachouri R."/>
            <person name="Kerrest A."/>
            <person name="Koszul R."/>
            <person name="Lemaire M."/>
            <person name="Lesur I."/>
            <person name="Ma L."/>
            <person name="Muller H."/>
            <person name="Nicaud J.-M."/>
            <person name="Nikolski M."/>
            <person name="Oztas S."/>
            <person name="Ozier-Kalogeropoulos O."/>
            <person name="Pellenz S."/>
            <person name="Potier S."/>
            <person name="Richard G.-F."/>
            <person name="Straub M.-L."/>
            <person name="Suleau A."/>
            <person name="Swennen D."/>
            <person name="Tekaia F."/>
            <person name="Wesolowski-Louvel M."/>
            <person name="Westhof E."/>
            <person name="Wirth B."/>
            <person name="Zeniou-Meyer M."/>
            <person name="Zivanovic Y."/>
            <person name="Bolotin-Fukuhara M."/>
            <person name="Thierry A."/>
            <person name="Bouchier C."/>
            <person name="Caudron B."/>
            <person name="Scarpelli C."/>
            <person name="Gaillardin C."/>
            <person name="Weissenbach J."/>
            <person name="Wincker P."/>
            <person name="Souciet J.-L."/>
        </authorList>
    </citation>
    <scope>NUCLEOTIDE SEQUENCE [LARGE SCALE GENOMIC DNA]</scope>
    <source>
        <strain>ATCC 36239 / CBS 767 / BCRC 21394 / JCM 1990 / NBRC 0083 / IGC 2968</strain>
    </source>
</reference>
<sequence length="378" mass="41163">MVKINASAITYTKGGEISKILSGTGFSIDTETLGPKQVVIQALATPINPSDLNQLAGTYASKPNFTSELDTPVPVAIGGNEGLYKVIEVGSDVTSYKNGDWVIPKMPSFGTWRTHALVTLDKPENPDPFIKVSSEDDKSIDLTQAATVSINPSTAYQLIDQFIKDWDPKGNDWIIQNGGNSQVGKFVVQIAKIRNIKTISVIRDGKPDQDQIVKELLDLGATKVITDKEAESEEYINKIVPGWVNEGKVILALNCVCGKSGSALVSHLTGNHLADYRSPHLVTYGGMSGQPLMYSSSESLFKNVTSKAYWLTANTKRNPQSKVDTVKKVLALYKSGDIKPVPFNGKEFNIKSTSDDYIKLFLKGIAESKTGKQVIVYN</sequence>
<proteinExistence type="inferred from homology"/>
<accession>Q6BLV6</accession>
<accession>B5RUD5</accession>
<gene>
    <name type="primary">ETR1</name>
    <name type="ordered locus">DEHA2F10362g</name>
</gene>
<protein>
    <recommendedName>
        <fullName>Enoyl-[acyl-carrier-protein] reductase 1, mitochondrial</fullName>
        <ecNumber>1.3.1.104</ecNumber>
    </recommendedName>
    <alternativeName>
        <fullName>2-enoyl thioester reductase 1</fullName>
    </alternativeName>
</protein>